<evidence type="ECO:0000255" key="1">
    <source>
        <dbReference type="HAMAP-Rule" id="MF_00360"/>
    </source>
</evidence>
<evidence type="ECO:0000305" key="2"/>
<dbReference type="EMBL" id="CP000227">
    <property type="protein sequence ID" value="ACM15720.1"/>
    <property type="molecule type" value="Genomic_DNA"/>
</dbReference>
<dbReference type="SMR" id="B9IT32"/>
<dbReference type="KEGG" id="bcq:BCQ_5324"/>
<dbReference type="HOGENOM" id="CLU_113441_5_3_9"/>
<dbReference type="Proteomes" id="UP000000441">
    <property type="component" value="Chromosome"/>
</dbReference>
<dbReference type="GO" id="GO:0005737">
    <property type="term" value="C:cytoplasm"/>
    <property type="evidence" value="ECO:0007669"/>
    <property type="project" value="UniProtKB-ARBA"/>
</dbReference>
<dbReference type="GO" id="GO:1990904">
    <property type="term" value="C:ribonucleoprotein complex"/>
    <property type="evidence" value="ECO:0007669"/>
    <property type="project" value="UniProtKB-KW"/>
</dbReference>
<dbReference type="GO" id="GO:0005840">
    <property type="term" value="C:ribosome"/>
    <property type="evidence" value="ECO:0007669"/>
    <property type="project" value="UniProtKB-KW"/>
</dbReference>
<dbReference type="GO" id="GO:0070181">
    <property type="term" value="F:small ribosomal subunit rRNA binding"/>
    <property type="evidence" value="ECO:0007669"/>
    <property type="project" value="TreeGrafter"/>
</dbReference>
<dbReference type="GO" id="GO:0003735">
    <property type="term" value="F:structural constituent of ribosome"/>
    <property type="evidence" value="ECO:0007669"/>
    <property type="project" value="InterPro"/>
</dbReference>
<dbReference type="GO" id="GO:0006412">
    <property type="term" value="P:translation"/>
    <property type="evidence" value="ECO:0007669"/>
    <property type="project" value="UniProtKB-UniRule"/>
</dbReference>
<dbReference type="CDD" id="cd00473">
    <property type="entry name" value="bS6"/>
    <property type="match status" value="1"/>
</dbReference>
<dbReference type="FunFam" id="3.30.70.60:FF:000002">
    <property type="entry name" value="30S ribosomal protein S6"/>
    <property type="match status" value="1"/>
</dbReference>
<dbReference type="Gene3D" id="3.30.70.60">
    <property type="match status" value="1"/>
</dbReference>
<dbReference type="HAMAP" id="MF_00360">
    <property type="entry name" value="Ribosomal_bS6"/>
    <property type="match status" value="1"/>
</dbReference>
<dbReference type="InterPro" id="IPR000529">
    <property type="entry name" value="Ribosomal_bS6"/>
</dbReference>
<dbReference type="InterPro" id="IPR020815">
    <property type="entry name" value="Ribosomal_bS6_CS"/>
</dbReference>
<dbReference type="InterPro" id="IPR035980">
    <property type="entry name" value="Ribosomal_bS6_sf"/>
</dbReference>
<dbReference type="InterPro" id="IPR020814">
    <property type="entry name" value="Ribosomal_S6_plastid/chlpt"/>
</dbReference>
<dbReference type="InterPro" id="IPR014717">
    <property type="entry name" value="Transl_elong_EF1B/ribsomal_bS6"/>
</dbReference>
<dbReference type="NCBIfam" id="TIGR00166">
    <property type="entry name" value="S6"/>
    <property type="match status" value="1"/>
</dbReference>
<dbReference type="PANTHER" id="PTHR21011">
    <property type="entry name" value="MITOCHONDRIAL 28S RIBOSOMAL PROTEIN S6"/>
    <property type="match status" value="1"/>
</dbReference>
<dbReference type="PANTHER" id="PTHR21011:SF1">
    <property type="entry name" value="SMALL RIBOSOMAL SUBUNIT PROTEIN BS6M"/>
    <property type="match status" value="1"/>
</dbReference>
<dbReference type="Pfam" id="PF01250">
    <property type="entry name" value="Ribosomal_S6"/>
    <property type="match status" value="1"/>
</dbReference>
<dbReference type="SUPFAM" id="SSF54995">
    <property type="entry name" value="Ribosomal protein S6"/>
    <property type="match status" value="1"/>
</dbReference>
<dbReference type="PROSITE" id="PS01048">
    <property type="entry name" value="RIBOSOMAL_S6"/>
    <property type="match status" value="1"/>
</dbReference>
<reference key="1">
    <citation type="journal article" date="2009" name="J. Bacteriol.">
        <title>Complete genome sequence of the extremophilic Bacillus cereus strain Q1 with industrial applications.</title>
        <authorList>
            <person name="Xiong Z."/>
            <person name="Jiang Y."/>
            <person name="Qi D."/>
            <person name="Lu H."/>
            <person name="Yang F."/>
            <person name="Yang J."/>
            <person name="Chen L."/>
            <person name="Sun L."/>
            <person name="Xu X."/>
            <person name="Xue Y."/>
            <person name="Zhu Y."/>
            <person name="Jin Q."/>
        </authorList>
    </citation>
    <scope>NUCLEOTIDE SEQUENCE [LARGE SCALE GENOMIC DNA]</scope>
    <source>
        <strain>Q1</strain>
    </source>
</reference>
<proteinExistence type="inferred from homology"/>
<feature type="chain" id="PRO_1000133510" description="Small ribosomal subunit protein bS6">
    <location>
        <begin position="1"/>
        <end position="96"/>
    </location>
</feature>
<protein>
    <recommendedName>
        <fullName evidence="1">Small ribosomal subunit protein bS6</fullName>
    </recommendedName>
    <alternativeName>
        <fullName evidence="2">30S ribosomal protein S6</fullName>
    </alternativeName>
</protein>
<keyword id="KW-0687">Ribonucleoprotein</keyword>
<keyword id="KW-0689">Ribosomal protein</keyword>
<keyword id="KW-0694">RNA-binding</keyword>
<keyword id="KW-0699">rRNA-binding</keyword>
<accession>B9IT32</accession>
<comment type="function">
    <text evidence="1">Binds together with bS18 to 16S ribosomal RNA.</text>
</comment>
<comment type="similarity">
    <text evidence="1">Belongs to the bacterial ribosomal protein bS6 family.</text>
</comment>
<sequence>MRKYEIMYIIRPGVEEEAQKALVERFAGVLTNNGAEIINTKEWGKRRLAYEINDLREGFYMILNVNANAEAINEFDRLAKINEDILRHIVVKEEEK</sequence>
<organism>
    <name type="scientific">Bacillus cereus (strain Q1)</name>
    <dbReference type="NCBI Taxonomy" id="361100"/>
    <lineage>
        <taxon>Bacteria</taxon>
        <taxon>Bacillati</taxon>
        <taxon>Bacillota</taxon>
        <taxon>Bacilli</taxon>
        <taxon>Bacillales</taxon>
        <taxon>Bacillaceae</taxon>
        <taxon>Bacillus</taxon>
        <taxon>Bacillus cereus group</taxon>
    </lineage>
</organism>
<name>RS6_BACCQ</name>
<gene>
    <name evidence="1" type="primary">rpsF</name>
    <name type="ordered locus">BCQ_5324</name>
</gene>